<feature type="chain" id="PRO_1000118798" description="Holo-[acyl-carrier-protein] synthase">
    <location>
        <begin position="1"/>
        <end position="126"/>
    </location>
</feature>
<feature type="binding site" evidence="1">
    <location>
        <position position="9"/>
    </location>
    <ligand>
        <name>Mg(2+)</name>
        <dbReference type="ChEBI" id="CHEBI:18420"/>
    </ligand>
</feature>
<feature type="binding site" evidence="1">
    <location>
        <position position="58"/>
    </location>
    <ligand>
        <name>Mg(2+)</name>
        <dbReference type="ChEBI" id="CHEBI:18420"/>
    </ligand>
</feature>
<dbReference type="EC" id="2.7.8.7" evidence="1"/>
<dbReference type="EMBL" id="CP001161">
    <property type="protein sequence ID" value="ACL30620.1"/>
    <property type="molecule type" value="Genomic_DNA"/>
</dbReference>
<dbReference type="RefSeq" id="WP_009874210.1">
    <property type="nucleotide sequence ID" value="NC_011833.1"/>
</dbReference>
<dbReference type="SMR" id="B8D949"/>
<dbReference type="KEGG" id="bap:BUAP5A_251"/>
<dbReference type="HOGENOM" id="CLU_089696_3_1_6"/>
<dbReference type="OrthoDB" id="517356at2"/>
<dbReference type="Proteomes" id="UP000006904">
    <property type="component" value="Chromosome"/>
</dbReference>
<dbReference type="GO" id="GO:0005737">
    <property type="term" value="C:cytoplasm"/>
    <property type="evidence" value="ECO:0007669"/>
    <property type="project" value="UniProtKB-SubCell"/>
</dbReference>
<dbReference type="GO" id="GO:0008897">
    <property type="term" value="F:holo-[acyl-carrier-protein] synthase activity"/>
    <property type="evidence" value="ECO:0007669"/>
    <property type="project" value="UniProtKB-UniRule"/>
</dbReference>
<dbReference type="GO" id="GO:0000287">
    <property type="term" value="F:magnesium ion binding"/>
    <property type="evidence" value="ECO:0007669"/>
    <property type="project" value="UniProtKB-UniRule"/>
</dbReference>
<dbReference type="GO" id="GO:0006633">
    <property type="term" value="P:fatty acid biosynthetic process"/>
    <property type="evidence" value="ECO:0007669"/>
    <property type="project" value="UniProtKB-UniRule"/>
</dbReference>
<dbReference type="FunFam" id="3.90.470.20:FF:000001">
    <property type="entry name" value="Holo-[acyl-carrier-protein] synthase"/>
    <property type="match status" value="1"/>
</dbReference>
<dbReference type="Gene3D" id="3.90.470.20">
    <property type="entry name" value="4'-phosphopantetheinyl transferase domain"/>
    <property type="match status" value="1"/>
</dbReference>
<dbReference type="HAMAP" id="MF_00101">
    <property type="entry name" value="AcpS"/>
    <property type="match status" value="1"/>
</dbReference>
<dbReference type="InterPro" id="IPR008278">
    <property type="entry name" value="4-PPantetheinyl_Trfase_dom"/>
</dbReference>
<dbReference type="InterPro" id="IPR037143">
    <property type="entry name" value="4-PPantetheinyl_Trfase_dom_sf"/>
</dbReference>
<dbReference type="InterPro" id="IPR002582">
    <property type="entry name" value="ACPS"/>
</dbReference>
<dbReference type="InterPro" id="IPR004568">
    <property type="entry name" value="Ppantetheine-prot_Trfase_dom"/>
</dbReference>
<dbReference type="NCBIfam" id="TIGR00516">
    <property type="entry name" value="acpS"/>
    <property type="match status" value="1"/>
</dbReference>
<dbReference type="NCBIfam" id="TIGR00556">
    <property type="entry name" value="pantethn_trn"/>
    <property type="match status" value="1"/>
</dbReference>
<dbReference type="Pfam" id="PF01648">
    <property type="entry name" value="ACPS"/>
    <property type="match status" value="1"/>
</dbReference>
<dbReference type="SUPFAM" id="SSF56214">
    <property type="entry name" value="4'-phosphopantetheinyl transferase"/>
    <property type="match status" value="1"/>
</dbReference>
<organism>
    <name type="scientific">Buchnera aphidicola subsp. Acyrthosiphon pisum (strain 5A)</name>
    <dbReference type="NCBI Taxonomy" id="563178"/>
    <lineage>
        <taxon>Bacteria</taxon>
        <taxon>Pseudomonadati</taxon>
        <taxon>Pseudomonadota</taxon>
        <taxon>Gammaproteobacteria</taxon>
        <taxon>Enterobacterales</taxon>
        <taxon>Erwiniaceae</taxon>
        <taxon>Buchnera</taxon>
    </lineage>
</organism>
<accession>B8D949</accession>
<comment type="function">
    <text evidence="1">Transfers the 4'-phosphopantetheine moiety from coenzyme A to a Ser of acyl-carrier-protein.</text>
</comment>
<comment type="catalytic activity">
    <reaction evidence="1">
        <text>apo-[ACP] + CoA = holo-[ACP] + adenosine 3',5'-bisphosphate + H(+)</text>
        <dbReference type="Rhea" id="RHEA:12068"/>
        <dbReference type="Rhea" id="RHEA-COMP:9685"/>
        <dbReference type="Rhea" id="RHEA-COMP:9690"/>
        <dbReference type="ChEBI" id="CHEBI:15378"/>
        <dbReference type="ChEBI" id="CHEBI:29999"/>
        <dbReference type="ChEBI" id="CHEBI:57287"/>
        <dbReference type="ChEBI" id="CHEBI:58343"/>
        <dbReference type="ChEBI" id="CHEBI:64479"/>
        <dbReference type="EC" id="2.7.8.7"/>
    </reaction>
</comment>
<comment type="cofactor">
    <cofactor evidence="1">
        <name>Mg(2+)</name>
        <dbReference type="ChEBI" id="CHEBI:18420"/>
    </cofactor>
</comment>
<comment type="subcellular location">
    <subcellularLocation>
        <location evidence="1">Cytoplasm</location>
    </subcellularLocation>
</comment>
<comment type="similarity">
    <text evidence="1">Belongs to the P-Pant transferase superfamily. AcpS family.</text>
</comment>
<proteinExistence type="inferred from homology"/>
<sequence>MSIIGIGIDFVEILRIKNIFLKYGDKFARKILSTEEWKKYILIDDSISFLAKKFVAKEAASKALGTGINHQITFNQLEFYKNKSGKPKLRFLKHALKKSKEIQCKSIHVSISDQKLYAYALVILEN</sequence>
<gene>
    <name evidence="1" type="primary">acpS</name>
    <name type="ordered locus">BUAP5A_251</name>
</gene>
<name>ACPS_BUCA5</name>
<protein>
    <recommendedName>
        <fullName evidence="1">Holo-[acyl-carrier-protein] synthase</fullName>
        <shortName evidence="1">Holo-ACP synthase</shortName>
        <ecNumber evidence="1">2.7.8.7</ecNumber>
    </recommendedName>
    <alternativeName>
        <fullName evidence="1">4'-phosphopantetheinyl transferase AcpS</fullName>
    </alternativeName>
</protein>
<evidence type="ECO:0000255" key="1">
    <source>
        <dbReference type="HAMAP-Rule" id="MF_00101"/>
    </source>
</evidence>
<reference key="1">
    <citation type="journal article" date="2009" name="Science">
        <title>The dynamics and time scale of ongoing genomic erosion in symbiotic bacteria.</title>
        <authorList>
            <person name="Moran N.A."/>
            <person name="McLaughlin H.J."/>
            <person name="Sorek R."/>
        </authorList>
    </citation>
    <scope>NUCLEOTIDE SEQUENCE [LARGE SCALE GENOMIC DNA]</scope>
    <source>
        <strain>5A</strain>
    </source>
</reference>
<keyword id="KW-0963">Cytoplasm</keyword>
<keyword id="KW-0275">Fatty acid biosynthesis</keyword>
<keyword id="KW-0276">Fatty acid metabolism</keyword>
<keyword id="KW-0444">Lipid biosynthesis</keyword>
<keyword id="KW-0443">Lipid metabolism</keyword>
<keyword id="KW-0460">Magnesium</keyword>
<keyword id="KW-0479">Metal-binding</keyword>
<keyword id="KW-0808">Transferase</keyword>